<evidence type="ECO:0000269" key="1">
    <source>
    </source>
</evidence>
<evidence type="ECO:0000305" key="2"/>
<reference key="1">
    <citation type="journal article" date="2012" name="Mol. Cell. Proteomics">
        <title>Peptidomics of three Bothrops snake venoms: insights into the molecular diversification of proteomes and peptidomes.</title>
        <authorList>
            <person name="Tashima A.K."/>
            <person name="Zelanis A."/>
            <person name="Kitano E.S."/>
            <person name="Ianzer D."/>
            <person name="Melo R.L."/>
            <person name="Rioli V."/>
            <person name="Sant'anna S.S."/>
            <person name="Schenberg A.C."/>
            <person name="Camargo A.C."/>
            <person name="Serrano S.M.T."/>
        </authorList>
    </citation>
    <scope>PROTEIN SEQUENCE</scope>
    <scope>SYNTHESIS</scope>
    <scope>FUNCTION</scope>
    <scope>PYROGLUTAMATE FORMATION AT GLN-1</scope>
    <scope>MASS SPECTROMETRY</scope>
    <source>
        <tissue>Venom</tissue>
    </source>
</reference>
<dbReference type="GO" id="GO:0005576">
    <property type="term" value="C:extracellular region"/>
    <property type="evidence" value="ECO:0007669"/>
    <property type="project" value="UniProtKB-SubCell"/>
</dbReference>
<dbReference type="GO" id="GO:0030414">
    <property type="term" value="F:peptidase inhibitor activity"/>
    <property type="evidence" value="ECO:0007669"/>
    <property type="project" value="UniProtKB-KW"/>
</dbReference>
<dbReference type="GO" id="GO:0090729">
    <property type="term" value="F:toxin activity"/>
    <property type="evidence" value="ECO:0007669"/>
    <property type="project" value="UniProtKB-KW"/>
</dbReference>
<dbReference type="GO" id="GO:0008217">
    <property type="term" value="P:regulation of blood pressure"/>
    <property type="evidence" value="ECO:0007669"/>
    <property type="project" value="UniProtKB-KW"/>
</dbReference>
<name>BPPAD_BOTCO</name>
<accession>P0DJK2</accession>
<proteinExistence type="evidence at protein level"/>
<keyword id="KW-0903">Direct protein sequencing</keyword>
<keyword id="KW-0382">Hypotensive agent</keyword>
<keyword id="KW-0481">Metalloenzyme inhibitor</keyword>
<keyword id="KW-0483">Metalloprotease inhibitor</keyword>
<keyword id="KW-0646">Protease inhibitor</keyword>
<keyword id="KW-0873">Pyrrolidone carboxylic acid</keyword>
<keyword id="KW-0964">Secreted</keyword>
<keyword id="KW-0800">Toxin</keyword>
<sequence>QNWPHPPMPP</sequence>
<comment type="function">
    <text evidence="1">This peptide evokes slight hypotension (-2 mmHg), when injected alone into rats. It has no bradykinin-potentiating effect, when 60 nmol of BPP-10d are coinjected with 0.5 ug of bradykinin into rats. It inhibits angiotensin converting enzyme (ACE) activity with a K(i)app of 9.12 uM.</text>
</comment>
<comment type="subcellular location">
    <subcellularLocation>
        <location>Secreted</location>
    </subcellularLocation>
</comment>
<comment type="tissue specificity">
    <text>Expressed by the venom gland.</text>
</comment>
<comment type="mass spectrometry"/>
<comment type="similarity">
    <text evidence="2">Belongs to the bradykinin-potentiating peptide family.</text>
</comment>
<protein>
    <recommendedName>
        <fullName>Bradykinin-potentiating peptide 10d</fullName>
        <shortName>BPP-10d</shortName>
    </recommendedName>
</protein>
<feature type="peptide" id="PRO_0000421899" description="Bradykinin-potentiating peptide 10d">
    <location>
        <begin position="1"/>
        <end position="10"/>
    </location>
</feature>
<feature type="modified residue" description="Pyrrolidone carboxylic acid" evidence="1">
    <location>
        <position position="1"/>
    </location>
</feature>
<organism>
    <name type="scientific">Bothrops cotiara</name>
    <name type="common">Cotiara</name>
    <name type="synonym">Rhinocerophis cotiara</name>
    <dbReference type="NCBI Taxonomy" id="8727"/>
    <lineage>
        <taxon>Eukaryota</taxon>
        <taxon>Metazoa</taxon>
        <taxon>Chordata</taxon>
        <taxon>Craniata</taxon>
        <taxon>Vertebrata</taxon>
        <taxon>Euteleostomi</taxon>
        <taxon>Lepidosauria</taxon>
        <taxon>Squamata</taxon>
        <taxon>Bifurcata</taxon>
        <taxon>Unidentata</taxon>
        <taxon>Episquamata</taxon>
        <taxon>Toxicofera</taxon>
        <taxon>Serpentes</taxon>
        <taxon>Colubroidea</taxon>
        <taxon>Viperidae</taxon>
        <taxon>Crotalinae</taxon>
        <taxon>Bothrops</taxon>
    </lineage>
</organism>